<organism>
    <name type="scientific">Bradyrhizobium diazoefficiens (strain JCM 10833 / BCRC 13528 / IAM 13628 / NBRC 14792 / USDA 110)</name>
    <dbReference type="NCBI Taxonomy" id="224911"/>
    <lineage>
        <taxon>Bacteria</taxon>
        <taxon>Pseudomonadati</taxon>
        <taxon>Pseudomonadota</taxon>
        <taxon>Alphaproteobacteria</taxon>
        <taxon>Hyphomicrobiales</taxon>
        <taxon>Nitrobacteraceae</taxon>
        <taxon>Bradyrhizobium</taxon>
    </lineage>
</organism>
<feature type="chain" id="PRO_0000432580" description="Sugar transporter SemiSWEET">
    <location>
        <begin position="1"/>
        <end position="86"/>
    </location>
</feature>
<feature type="transmembrane region" description="Helical; Name=1" evidence="1">
    <location>
        <begin position="3"/>
        <end position="23"/>
    </location>
</feature>
<feature type="transmembrane region" description="Helical; Name=2" evidence="1">
    <location>
        <begin position="37"/>
        <end position="57"/>
    </location>
</feature>
<feature type="transmembrane region" description="Helical; Name=3" evidence="1">
    <location>
        <begin position="61"/>
        <end position="81"/>
    </location>
</feature>
<feature type="domain" description="PQ-loop" evidence="1">
    <location>
        <begin position="6"/>
        <end position="63"/>
    </location>
</feature>
<dbReference type="EMBL" id="BA000040">
    <property type="protein sequence ID" value="BAC51725.1"/>
    <property type="molecule type" value="Genomic_DNA"/>
</dbReference>
<dbReference type="RefSeq" id="NP_773100.1">
    <property type="nucleotide sequence ID" value="NC_004463.1"/>
</dbReference>
<dbReference type="RefSeq" id="WP_011089200.1">
    <property type="nucleotide sequence ID" value="NC_004463.1"/>
</dbReference>
<dbReference type="SMR" id="Q89G85"/>
<dbReference type="DIP" id="DIP-61076N"/>
<dbReference type="STRING" id="224911.AAV28_29855"/>
<dbReference type="TCDB" id="2.A.123.2.14">
    <property type="family name" value="the sweet, pq-loop, saliva, mtn3 (sweet) family"/>
</dbReference>
<dbReference type="EnsemblBacteria" id="BAC51725">
    <property type="protein sequence ID" value="BAC51725"/>
    <property type="gene ID" value="BAC51725"/>
</dbReference>
<dbReference type="GeneID" id="46493433"/>
<dbReference type="KEGG" id="bja:bsr6460"/>
<dbReference type="PATRIC" id="fig|224911.44.peg.6450"/>
<dbReference type="eggNOG" id="COG4095">
    <property type="taxonomic scope" value="Bacteria"/>
</dbReference>
<dbReference type="HOGENOM" id="CLU_135915_1_1_5"/>
<dbReference type="InParanoid" id="Q89G85"/>
<dbReference type="OrthoDB" id="9814012at2"/>
<dbReference type="Proteomes" id="UP000002526">
    <property type="component" value="Chromosome"/>
</dbReference>
<dbReference type="GO" id="GO:0005886">
    <property type="term" value="C:plasma membrane"/>
    <property type="evidence" value="ECO:0007669"/>
    <property type="project" value="UniProtKB-SubCell"/>
</dbReference>
<dbReference type="GO" id="GO:0051119">
    <property type="term" value="F:sugar transmembrane transporter activity"/>
    <property type="evidence" value="ECO:0007669"/>
    <property type="project" value="InterPro"/>
</dbReference>
<dbReference type="Gene3D" id="1.20.1280.290">
    <property type="match status" value="1"/>
</dbReference>
<dbReference type="InterPro" id="IPR006603">
    <property type="entry name" value="PQ-loop_rpt"/>
</dbReference>
<dbReference type="InterPro" id="IPR047662">
    <property type="entry name" value="SemiSWEET"/>
</dbReference>
<dbReference type="NCBIfam" id="NF037968">
    <property type="entry name" value="SemiSWEET_2"/>
    <property type="match status" value="1"/>
</dbReference>
<dbReference type="Pfam" id="PF04193">
    <property type="entry name" value="PQ-loop"/>
    <property type="match status" value="1"/>
</dbReference>
<sequence>MDPFLIKLIGFAAATCTTVAYAPQFIKVLKTRSARDISLGMFLVMVLGLALWLIYGLLSGDAPLIASNAVTMLLAGGILVMKLRYG</sequence>
<proteinExistence type="evidence at protein level"/>
<comment type="function">
    <text evidence="2">Mediates sucrose transmembrane transport down a concentration gradient.</text>
</comment>
<comment type="subunit">
    <text evidence="3 6">Homodimer (PubMed:25186729). Homooligomer (Probable).</text>
</comment>
<comment type="subcellular location">
    <subcellularLocation>
        <location evidence="2">Cell membrane</location>
        <topology evidence="5">Multi-pass membrane protein</topology>
    </subcellularLocation>
</comment>
<keyword id="KW-1003">Cell membrane</keyword>
<keyword id="KW-0472">Membrane</keyword>
<keyword id="KW-1185">Reference proteome</keyword>
<keyword id="KW-0762">Sugar transport</keyword>
<keyword id="KW-0812">Transmembrane</keyword>
<keyword id="KW-1133">Transmembrane helix</keyword>
<keyword id="KW-0813">Transport</keyword>
<evidence type="ECO:0000255" key="1"/>
<evidence type="ECO:0000269" key="2">
    <source>
    </source>
</evidence>
<evidence type="ECO:0000269" key="3">
    <source>
    </source>
</evidence>
<evidence type="ECO:0000303" key="4">
    <source>
    </source>
</evidence>
<evidence type="ECO:0000305" key="5"/>
<evidence type="ECO:0000305" key="6">
    <source>
    </source>
</evidence>
<evidence type="ECO:0000312" key="7">
    <source>
        <dbReference type="EMBL" id="BAC51725.1"/>
    </source>
</evidence>
<evidence type="ECO:0000312" key="8">
    <source>
        <dbReference type="Proteomes" id="UP000002526"/>
    </source>
</evidence>
<gene>
    <name evidence="7" type="ordered locus">bsr6460</name>
</gene>
<protein>
    <recommendedName>
        <fullName evidence="4">Sugar transporter SemiSWEET</fullName>
    </recommendedName>
</protein>
<reference key="1">
    <citation type="journal article" date="2002" name="DNA Res.">
        <title>Complete genomic sequence of nitrogen-fixing symbiotic bacterium Bradyrhizobium japonicum USDA110.</title>
        <authorList>
            <person name="Kaneko T."/>
            <person name="Nakamura Y."/>
            <person name="Sato S."/>
            <person name="Minamisawa K."/>
            <person name="Uchiumi T."/>
            <person name="Sasamoto S."/>
            <person name="Watanabe A."/>
            <person name="Idesawa K."/>
            <person name="Iriguchi M."/>
            <person name="Kawashima K."/>
            <person name="Kohara M."/>
            <person name="Matsumoto M."/>
            <person name="Shimpo S."/>
            <person name="Tsuruoka H."/>
            <person name="Wada T."/>
            <person name="Yamada M."/>
            <person name="Tabata S."/>
        </authorList>
    </citation>
    <scope>NUCLEOTIDE SEQUENCE [LARGE SCALE GENOMIC DNA]</scope>
    <source>
        <strain evidence="8">JCM 10833 / BCRC 13528 / IAM 13628 / NBRC 14792 / USDA 110</strain>
    </source>
</reference>
<reference key="2">
    <citation type="journal article" date="2013" name="Proc. Natl. Acad. Sci. U.S.A.">
        <title>Functional role of oligomerization for bacterial and plant SWEET sugar transporter family.</title>
        <authorList>
            <person name="Xuan Y.H."/>
            <person name="Hu Y.B."/>
            <person name="Chen L.-Q."/>
            <person name="Sosso D."/>
            <person name="Ducat D.C."/>
            <person name="Hou B.-H."/>
            <person name="Frommer W.B."/>
        </authorList>
    </citation>
    <scope>FUNCTION</scope>
    <scope>SUBUNIT</scope>
    <scope>SUBCELLULAR LOCATION</scope>
</reference>
<reference key="3">
    <citation type="journal article" date="2014" name="Nature">
        <title>Structures of bacterial homologues of SWEET transporters in two distinct conformations.</title>
        <authorList>
            <person name="Xu Y."/>
            <person name="Tao Y."/>
            <person name="Cheung L.S."/>
            <person name="Fan C."/>
            <person name="Chen L.Q."/>
            <person name="Xu S."/>
            <person name="Perry K."/>
            <person name="Frommer W.B."/>
            <person name="Feng L."/>
        </authorList>
    </citation>
    <scope>SUBUNIT</scope>
</reference>
<accession>Q89G85</accession>
<name>SWEET_BRADU</name>